<organism>
    <name type="scientific">Homo sapiens</name>
    <name type="common">Human</name>
    <dbReference type="NCBI Taxonomy" id="9606"/>
    <lineage>
        <taxon>Eukaryota</taxon>
        <taxon>Metazoa</taxon>
        <taxon>Chordata</taxon>
        <taxon>Craniata</taxon>
        <taxon>Vertebrata</taxon>
        <taxon>Euteleostomi</taxon>
        <taxon>Mammalia</taxon>
        <taxon>Eutheria</taxon>
        <taxon>Euarchontoglires</taxon>
        <taxon>Primates</taxon>
        <taxon>Haplorrhini</taxon>
        <taxon>Catarrhini</taxon>
        <taxon>Hominidae</taxon>
        <taxon>Homo</taxon>
    </lineage>
</organism>
<gene>
    <name type="ORF">PRO0461</name>
</gene>
<accession>Q9UI25</accession>
<reference key="1">
    <citation type="submission" date="1998-12" db="EMBL/GenBank/DDBJ databases">
        <title>Functional prediction of the coding sequences of 9 new genes deduced by analysis of cDNA clones from human fetal liver.</title>
        <authorList>
            <person name="Zhang C."/>
            <person name="Yu Y."/>
            <person name="Zhang S."/>
            <person name="Ouyang S."/>
            <person name="Luo L."/>
            <person name="Wei H."/>
            <person name="Zhou G."/>
            <person name="Zhang Y."/>
            <person name="Liu M."/>
            <person name="He F."/>
        </authorList>
    </citation>
    <scope>NUCLEOTIDE SEQUENCE [LARGE SCALE MRNA]</scope>
    <source>
        <tissue>Fetal liver</tissue>
    </source>
</reference>
<reference key="2">
    <citation type="journal article" date="2004" name="Nature">
        <title>The sequence and analysis of duplication-rich human chromosome 16.</title>
        <authorList>
            <person name="Martin J."/>
            <person name="Han C."/>
            <person name="Gordon L.A."/>
            <person name="Terry A."/>
            <person name="Prabhakar S."/>
            <person name="She X."/>
            <person name="Xie G."/>
            <person name="Hellsten U."/>
            <person name="Chan Y.M."/>
            <person name="Altherr M."/>
            <person name="Couronne O."/>
            <person name="Aerts A."/>
            <person name="Bajorek E."/>
            <person name="Black S."/>
            <person name="Blumer H."/>
            <person name="Branscomb E."/>
            <person name="Brown N.C."/>
            <person name="Bruno W.J."/>
            <person name="Buckingham J.M."/>
            <person name="Callen D.F."/>
            <person name="Campbell C.S."/>
            <person name="Campbell M.L."/>
            <person name="Campbell E.W."/>
            <person name="Caoile C."/>
            <person name="Challacombe J.F."/>
            <person name="Chasteen L.A."/>
            <person name="Chertkov O."/>
            <person name="Chi H.C."/>
            <person name="Christensen M."/>
            <person name="Clark L.M."/>
            <person name="Cohn J.D."/>
            <person name="Denys M."/>
            <person name="Detter J.C."/>
            <person name="Dickson M."/>
            <person name="Dimitrijevic-Bussod M."/>
            <person name="Escobar J."/>
            <person name="Fawcett J.J."/>
            <person name="Flowers D."/>
            <person name="Fotopulos D."/>
            <person name="Glavina T."/>
            <person name="Gomez M."/>
            <person name="Gonzales E."/>
            <person name="Goodstein D."/>
            <person name="Goodwin L.A."/>
            <person name="Grady D.L."/>
            <person name="Grigoriev I."/>
            <person name="Groza M."/>
            <person name="Hammon N."/>
            <person name="Hawkins T."/>
            <person name="Haydu L."/>
            <person name="Hildebrand C.E."/>
            <person name="Huang W."/>
            <person name="Israni S."/>
            <person name="Jett J."/>
            <person name="Jewett P.B."/>
            <person name="Kadner K."/>
            <person name="Kimball H."/>
            <person name="Kobayashi A."/>
            <person name="Krawczyk M.-C."/>
            <person name="Leyba T."/>
            <person name="Longmire J.L."/>
            <person name="Lopez F."/>
            <person name="Lou Y."/>
            <person name="Lowry S."/>
            <person name="Ludeman T."/>
            <person name="Manohar C.F."/>
            <person name="Mark G.A."/>
            <person name="McMurray K.L."/>
            <person name="Meincke L.J."/>
            <person name="Morgan J."/>
            <person name="Moyzis R.K."/>
            <person name="Mundt M.O."/>
            <person name="Munk A.C."/>
            <person name="Nandkeshwar R.D."/>
            <person name="Pitluck S."/>
            <person name="Pollard M."/>
            <person name="Predki P."/>
            <person name="Parson-Quintana B."/>
            <person name="Ramirez L."/>
            <person name="Rash S."/>
            <person name="Retterer J."/>
            <person name="Ricke D.O."/>
            <person name="Robinson D.L."/>
            <person name="Rodriguez A."/>
            <person name="Salamov A."/>
            <person name="Saunders E.H."/>
            <person name="Scott D."/>
            <person name="Shough T."/>
            <person name="Stallings R.L."/>
            <person name="Stalvey M."/>
            <person name="Sutherland R.D."/>
            <person name="Tapia R."/>
            <person name="Tesmer J.G."/>
            <person name="Thayer N."/>
            <person name="Thompson L.S."/>
            <person name="Tice H."/>
            <person name="Torney D.C."/>
            <person name="Tran-Gyamfi M."/>
            <person name="Tsai M."/>
            <person name="Ulanovsky L.E."/>
            <person name="Ustaszewska A."/>
            <person name="Vo N."/>
            <person name="White P.S."/>
            <person name="Williams A.L."/>
            <person name="Wills P.L."/>
            <person name="Wu J.-R."/>
            <person name="Wu K."/>
            <person name="Yang J."/>
            <person name="DeJong P."/>
            <person name="Bruce D."/>
            <person name="Doggett N.A."/>
            <person name="Deaven L."/>
            <person name="Schmutz J."/>
            <person name="Grimwood J."/>
            <person name="Richardson P."/>
            <person name="Rokhsar D.S."/>
            <person name="Eichler E.E."/>
            <person name="Gilna P."/>
            <person name="Lucas S.M."/>
            <person name="Myers R.M."/>
            <person name="Rubin E.M."/>
            <person name="Pennacchio L.A."/>
        </authorList>
    </citation>
    <scope>NUCLEOTIDE SEQUENCE [LARGE SCALE GENOMIC DNA]</scope>
</reference>
<name>YP002_HUMAN</name>
<comment type="caution">
    <text evidence="1">Product of a dubious CDS prediction. Found in the 3'-UTR of PDPK1. No homolog.</text>
</comment>
<dbReference type="EMBL" id="AF111845">
    <property type="protein sequence ID" value="AAF16685.1"/>
    <property type="molecule type" value="mRNA"/>
</dbReference>
<dbReference type="EMBL" id="AC005591">
    <property type="status" value="NOT_ANNOTATED_CDS"/>
    <property type="molecule type" value="Genomic_DNA"/>
</dbReference>
<dbReference type="BioMuta" id="PRO0461"/>
<dbReference type="neXtProt" id="NX_Q9UI25"/>
<dbReference type="InParanoid" id="Q9UI25"/>
<dbReference type="PAN-GO" id="Q9UI25">
    <property type="GO annotations" value="0 GO annotations based on evolutionary models"/>
</dbReference>
<dbReference type="PhylomeDB" id="Q9UI25"/>
<dbReference type="ChiTaRS" id="PDPK1">
    <property type="organism name" value="human"/>
</dbReference>
<dbReference type="Pharos" id="Q9UI25">
    <property type="development level" value="Tdark"/>
</dbReference>
<dbReference type="Proteomes" id="UP000005640">
    <property type="component" value="Unplaced"/>
</dbReference>
<dbReference type="RNAct" id="Q9UI25">
    <property type="molecule type" value="protein"/>
</dbReference>
<feature type="chain" id="PRO_0000058139" description="Putative uncharacterized protein PRO0461">
    <location>
        <begin position="1"/>
        <end position="63"/>
    </location>
</feature>
<evidence type="ECO:0000305" key="1"/>
<protein>
    <recommendedName>
        <fullName>Putative uncharacterized protein PRO0461</fullName>
    </recommendedName>
</protein>
<proteinExistence type="uncertain"/>
<sequence>MEEMSYGENSGTHVGSFSCSPQPSQQMKVLFVGNSFLLTPVLHRQPHLQPCNFGPEVVAPQRL</sequence>
<keyword id="KW-1185">Reference proteome</keyword>